<comment type="function">
    <text evidence="1">Catalyzes a trans-dehydration via an enolate intermediate.</text>
</comment>
<comment type="catalytic activity">
    <reaction evidence="1">
        <text>3-dehydroquinate = 3-dehydroshikimate + H2O</text>
        <dbReference type="Rhea" id="RHEA:21096"/>
        <dbReference type="ChEBI" id="CHEBI:15377"/>
        <dbReference type="ChEBI" id="CHEBI:16630"/>
        <dbReference type="ChEBI" id="CHEBI:32364"/>
        <dbReference type="EC" id="4.2.1.10"/>
    </reaction>
</comment>
<comment type="pathway">
    <text evidence="1">Metabolic intermediate biosynthesis; chorismate biosynthesis; chorismate from D-erythrose 4-phosphate and phosphoenolpyruvate: step 3/7.</text>
</comment>
<comment type="subunit">
    <text evidence="1">Homododecamer.</text>
</comment>
<comment type="similarity">
    <text evidence="1">Belongs to the type-II 3-dehydroquinase family.</text>
</comment>
<accession>A4J3D2</accession>
<proteinExistence type="inferred from homology"/>
<reference key="1">
    <citation type="submission" date="2007-03" db="EMBL/GenBank/DDBJ databases">
        <title>Complete sequence of Desulfotomaculum reducens MI-1.</title>
        <authorList>
            <consortium name="US DOE Joint Genome Institute"/>
            <person name="Copeland A."/>
            <person name="Lucas S."/>
            <person name="Lapidus A."/>
            <person name="Barry K."/>
            <person name="Detter J.C."/>
            <person name="Glavina del Rio T."/>
            <person name="Hammon N."/>
            <person name="Israni S."/>
            <person name="Dalin E."/>
            <person name="Tice H."/>
            <person name="Pitluck S."/>
            <person name="Sims D."/>
            <person name="Brettin T."/>
            <person name="Bruce D."/>
            <person name="Han C."/>
            <person name="Tapia R."/>
            <person name="Schmutz J."/>
            <person name="Larimer F."/>
            <person name="Land M."/>
            <person name="Hauser L."/>
            <person name="Kyrpides N."/>
            <person name="Kim E."/>
            <person name="Tebo B.M."/>
            <person name="Richardson P."/>
        </authorList>
    </citation>
    <scope>NUCLEOTIDE SEQUENCE [LARGE SCALE GENOMIC DNA]</scope>
    <source>
        <strain>ATCC BAA-1160 / DSM 100696 / MI-1</strain>
    </source>
</reference>
<feature type="chain" id="PRO_1000071580" description="3-dehydroquinate dehydratase">
    <location>
        <begin position="1"/>
        <end position="147"/>
    </location>
</feature>
<feature type="active site" description="Proton acceptor" evidence="1">
    <location>
        <position position="22"/>
    </location>
</feature>
<feature type="active site" description="Proton donor" evidence="1">
    <location>
        <position position="99"/>
    </location>
</feature>
<feature type="binding site" evidence="1">
    <location>
        <position position="73"/>
    </location>
    <ligand>
        <name>substrate</name>
    </ligand>
</feature>
<feature type="binding site" evidence="1">
    <location>
        <position position="79"/>
    </location>
    <ligand>
        <name>substrate</name>
    </ligand>
</feature>
<feature type="binding site" evidence="1">
    <location>
        <position position="86"/>
    </location>
    <ligand>
        <name>substrate</name>
    </ligand>
</feature>
<feature type="binding site" evidence="1">
    <location>
        <begin position="100"/>
        <end position="101"/>
    </location>
    <ligand>
        <name>substrate</name>
    </ligand>
</feature>
<feature type="binding site" evidence="1">
    <location>
        <position position="110"/>
    </location>
    <ligand>
        <name>substrate</name>
    </ligand>
</feature>
<feature type="site" description="Transition state stabilizer" evidence="1">
    <location>
        <position position="17"/>
    </location>
</feature>
<gene>
    <name evidence="1" type="primary">aroQ</name>
    <name type="ordered locus">Dred_1050</name>
</gene>
<sequence>MKILVLHGPNLNRLGKREPAVYGSLTLEEINAQILNFTQERGIRVEFFQSNHEGDLVDQLQAAAESMDAVVFNPGAFTHYSIALRDAVASIDIPVIEVHLSNIHAREEFRHKSVIAPVAAGQISGFGSASYLLGIQAALSLAQSRRN</sequence>
<name>AROQ_DESRM</name>
<dbReference type="EC" id="4.2.1.10" evidence="1"/>
<dbReference type="EMBL" id="CP000612">
    <property type="protein sequence ID" value="ABO49585.1"/>
    <property type="molecule type" value="Genomic_DNA"/>
</dbReference>
<dbReference type="RefSeq" id="WP_011877411.1">
    <property type="nucleotide sequence ID" value="NC_009253.1"/>
</dbReference>
<dbReference type="SMR" id="A4J3D2"/>
<dbReference type="STRING" id="349161.Dred_1050"/>
<dbReference type="KEGG" id="drm:Dred_1050"/>
<dbReference type="eggNOG" id="COG0757">
    <property type="taxonomic scope" value="Bacteria"/>
</dbReference>
<dbReference type="HOGENOM" id="CLU_090968_3_0_9"/>
<dbReference type="OrthoDB" id="9790793at2"/>
<dbReference type="UniPathway" id="UPA00053">
    <property type="reaction ID" value="UER00086"/>
</dbReference>
<dbReference type="Proteomes" id="UP000001556">
    <property type="component" value="Chromosome"/>
</dbReference>
<dbReference type="GO" id="GO:0003855">
    <property type="term" value="F:3-dehydroquinate dehydratase activity"/>
    <property type="evidence" value="ECO:0007669"/>
    <property type="project" value="UniProtKB-UniRule"/>
</dbReference>
<dbReference type="GO" id="GO:0008652">
    <property type="term" value="P:amino acid biosynthetic process"/>
    <property type="evidence" value="ECO:0007669"/>
    <property type="project" value="UniProtKB-KW"/>
</dbReference>
<dbReference type="GO" id="GO:0009073">
    <property type="term" value="P:aromatic amino acid family biosynthetic process"/>
    <property type="evidence" value="ECO:0007669"/>
    <property type="project" value="UniProtKB-KW"/>
</dbReference>
<dbReference type="GO" id="GO:0009423">
    <property type="term" value="P:chorismate biosynthetic process"/>
    <property type="evidence" value="ECO:0007669"/>
    <property type="project" value="UniProtKB-UniRule"/>
</dbReference>
<dbReference type="GO" id="GO:0019631">
    <property type="term" value="P:quinate catabolic process"/>
    <property type="evidence" value="ECO:0007669"/>
    <property type="project" value="TreeGrafter"/>
</dbReference>
<dbReference type="CDD" id="cd00466">
    <property type="entry name" value="DHQase_II"/>
    <property type="match status" value="1"/>
</dbReference>
<dbReference type="Gene3D" id="3.40.50.9100">
    <property type="entry name" value="Dehydroquinase, class II"/>
    <property type="match status" value="1"/>
</dbReference>
<dbReference type="HAMAP" id="MF_00169">
    <property type="entry name" value="AroQ"/>
    <property type="match status" value="1"/>
</dbReference>
<dbReference type="InterPro" id="IPR001874">
    <property type="entry name" value="DHquinase_II"/>
</dbReference>
<dbReference type="InterPro" id="IPR018509">
    <property type="entry name" value="DHquinase_II_CS"/>
</dbReference>
<dbReference type="InterPro" id="IPR036441">
    <property type="entry name" value="DHquinase_II_sf"/>
</dbReference>
<dbReference type="NCBIfam" id="TIGR01088">
    <property type="entry name" value="aroQ"/>
    <property type="match status" value="1"/>
</dbReference>
<dbReference type="NCBIfam" id="NF003805">
    <property type="entry name" value="PRK05395.1-2"/>
    <property type="match status" value="1"/>
</dbReference>
<dbReference type="NCBIfam" id="NF003806">
    <property type="entry name" value="PRK05395.1-3"/>
    <property type="match status" value="1"/>
</dbReference>
<dbReference type="NCBIfam" id="NF003807">
    <property type="entry name" value="PRK05395.1-4"/>
    <property type="match status" value="1"/>
</dbReference>
<dbReference type="PANTHER" id="PTHR21272">
    <property type="entry name" value="CATABOLIC 3-DEHYDROQUINASE"/>
    <property type="match status" value="1"/>
</dbReference>
<dbReference type="PANTHER" id="PTHR21272:SF3">
    <property type="entry name" value="CATABOLIC 3-DEHYDROQUINASE"/>
    <property type="match status" value="1"/>
</dbReference>
<dbReference type="Pfam" id="PF01220">
    <property type="entry name" value="DHquinase_II"/>
    <property type="match status" value="1"/>
</dbReference>
<dbReference type="PIRSF" id="PIRSF001399">
    <property type="entry name" value="DHquinase_II"/>
    <property type="match status" value="1"/>
</dbReference>
<dbReference type="SUPFAM" id="SSF52304">
    <property type="entry name" value="Type II 3-dehydroquinate dehydratase"/>
    <property type="match status" value="1"/>
</dbReference>
<dbReference type="PROSITE" id="PS01029">
    <property type="entry name" value="DEHYDROQUINASE_II"/>
    <property type="match status" value="1"/>
</dbReference>
<evidence type="ECO:0000255" key="1">
    <source>
        <dbReference type="HAMAP-Rule" id="MF_00169"/>
    </source>
</evidence>
<keyword id="KW-0028">Amino-acid biosynthesis</keyword>
<keyword id="KW-0057">Aromatic amino acid biosynthesis</keyword>
<keyword id="KW-0456">Lyase</keyword>
<keyword id="KW-1185">Reference proteome</keyword>
<protein>
    <recommendedName>
        <fullName evidence="1">3-dehydroquinate dehydratase</fullName>
        <shortName evidence="1">3-dehydroquinase</shortName>
        <ecNumber evidence="1">4.2.1.10</ecNumber>
    </recommendedName>
    <alternativeName>
        <fullName evidence="1">Type II DHQase</fullName>
    </alternativeName>
</protein>
<organism>
    <name type="scientific">Desulforamulus reducens (strain ATCC BAA-1160 / DSM 100696 / MI-1)</name>
    <name type="common">Desulfotomaculum reducens</name>
    <dbReference type="NCBI Taxonomy" id="349161"/>
    <lineage>
        <taxon>Bacteria</taxon>
        <taxon>Bacillati</taxon>
        <taxon>Bacillota</taxon>
        <taxon>Clostridia</taxon>
        <taxon>Eubacteriales</taxon>
        <taxon>Peptococcaceae</taxon>
        <taxon>Desulforamulus</taxon>
    </lineage>
</organism>